<sequence length="319" mass="34337">MTDASGSERLKRAKGISEGTPSSLPDHLIRATAAEGKIRVVGLVATQAVQEARERHKLSYVATVALGRAMSAALLLAANLKRRQARINLQLKGNGPLGNIWVDAGLDGTVRGYVSNPAIELPLTAESKLDVGQAVGRYGYLHVLRDLGYGQPYTSAVELVSGEVGDDITYYLSSSEQIPSAVLLGVNLDSQRVRAAGGVLLQLMPGAPASLIPEMEARLAKVEEFSPMLACGGGLRELLQLCLGDLDLKIAPEMRTIRFYCKCNSDRVKGALRMLGRDELLDMIHTDKGAEAVCQFCNEVYRISEDELRSIVAEMSATP</sequence>
<feature type="chain" id="PRO_0000238104" description="33 kDa chaperonin">
    <location>
        <begin position="1"/>
        <end position="319"/>
    </location>
</feature>
<feature type="region of interest" description="Disordered" evidence="2">
    <location>
        <begin position="1"/>
        <end position="25"/>
    </location>
</feature>
<feature type="compositionally biased region" description="Basic and acidic residues" evidence="2">
    <location>
        <begin position="1"/>
        <end position="10"/>
    </location>
</feature>
<feature type="disulfide bond" description="Redox-active" evidence="1">
    <location>
        <begin position="261"/>
        <end position="263"/>
    </location>
</feature>
<feature type="disulfide bond" description="Redox-active" evidence="1">
    <location>
        <begin position="294"/>
        <end position="297"/>
    </location>
</feature>
<organism>
    <name type="scientific">Synechococcus sp. (strain JA-2-3B'a(2-13))</name>
    <name type="common">Cyanobacteria bacterium Yellowstone B-Prime</name>
    <dbReference type="NCBI Taxonomy" id="321332"/>
    <lineage>
        <taxon>Bacteria</taxon>
        <taxon>Bacillati</taxon>
        <taxon>Cyanobacteriota</taxon>
        <taxon>Cyanophyceae</taxon>
        <taxon>Synechococcales</taxon>
        <taxon>Synechococcaceae</taxon>
        <taxon>Synechococcus</taxon>
    </lineage>
</organism>
<dbReference type="EMBL" id="CP000240">
    <property type="protein sequence ID" value="ABD02404.1"/>
    <property type="molecule type" value="Genomic_DNA"/>
</dbReference>
<dbReference type="SMR" id="Q2JLK3"/>
<dbReference type="STRING" id="321332.CYB_1437"/>
<dbReference type="KEGG" id="cyb:CYB_1437"/>
<dbReference type="eggNOG" id="COG1281">
    <property type="taxonomic scope" value="Bacteria"/>
</dbReference>
<dbReference type="HOGENOM" id="CLU_054493_1_0_3"/>
<dbReference type="OrthoDB" id="9776534at2"/>
<dbReference type="Proteomes" id="UP000001938">
    <property type="component" value="Chromosome"/>
</dbReference>
<dbReference type="GO" id="GO:0005737">
    <property type="term" value="C:cytoplasm"/>
    <property type="evidence" value="ECO:0007669"/>
    <property type="project" value="UniProtKB-SubCell"/>
</dbReference>
<dbReference type="GO" id="GO:0044183">
    <property type="term" value="F:protein folding chaperone"/>
    <property type="evidence" value="ECO:0007669"/>
    <property type="project" value="TreeGrafter"/>
</dbReference>
<dbReference type="GO" id="GO:0051082">
    <property type="term" value="F:unfolded protein binding"/>
    <property type="evidence" value="ECO:0007669"/>
    <property type="project" value="UniProtKB-UniRule"/>
</dbReference>
<dbReference type="GO" id="GO:0042026">
    <property type="term" value="P:protein refolding"/>
    <property type="evidence" value="ECO:0007669"/>
    <property type="project" value="TreeGrafter"/>
</dbReference>
<dbReference type="CDD" id="cd00498">
    <property type="entry name" value="Hsp33"/>
    <property type="match status" value="1"/>
</dbReference>
<dbReference type="Gene3D" id="3.55.30.10">
    <property type="entry name" value="Hsp33 domain"/>
    <property type="match status" value="1"/>
</dbReference>
<dbReference type="Gene3D" id="3.90.1280.10">
    <property type="entry name" value="HSP33 redox switch-like"/>
    <property type="match status" value="1"/>
</dbReference>
<dbReference type="HAMAP" id="MF_00117">
    <property type="entry name" value="HslO"/>
    <property type="match status" value="1"/>
</dbReference>
<dbReference type="InterPro" id="IPR000397">
    <property type="entry name" value="Heat_shock_Hsp33"/>
</dbReference>
<dbReference type="InterPro" id="IPR016154">
    <property type="entry name" value="Heat_shock_Hsp33_C"/>
</dbReference>
<dbReference type="InterPro" id="IPR016153">
    <property type="entry name" value="Heat_shock_Hsp33_N"/>
</dbReference>
<dbReference type="NCBIfam" id="NF001033">
    <property type="entry name" value="PRK00114.1"/>
    <property type="match status" value="1"/>
</dbReference>
<dbReference type="PANTHER" id="PTHR30111">
    <property type="entry name" value="33 KDA CHAPERONIN"/>
    <property type="match status" value="1"/>
</dbReference>
<dbReference type="PANTHER" id="PTHR30111:SF1">
    <property type="entry name" value="33 KDA CHAPERONIN"/>
    <property type="match status" value="1"/>
</dbReference>
<dbReference type="Pfam" id="PF01430">
    <property type="entry name" value="HSP33"/>
    <property type="match status" value="1"/>
</dbReference>
<dbReference type="PIRSF" id="PIRSF005261">
    <property type="entry name" value="Heat_shock_Hsp33"/>
    <property type="match status" value="1"/>
</dbReference>
<dbReference type="SUPFAM" id="SSF64397">
    <property type="entry name" value="Hsp33 domain"/>
    <property type="match status" value="1"/>
</dbReference>
<dbReference type="SUPFAM" id="SSF118352">
    <property type="entry name" value="HSP33 redox switch-like"/>
    <property type="match status" value="1"/>
</dbReference>
<comment type="function">
    <text evidence="1">Redox regulated molecular chaperone. Protects both thermally unfolding and oxidatively damaged proteins from irreversible aggregation. Plays an important role in the bacterial defense system toward oxidative stress.</text>
</comment>
<comment type="subcellular location">
    <subcellularLocation>
        <location evidence="1">Cytoplasm</location>
    </subcellularLocation>
</comment>
<comment type="PTM">
    <text evidence="1">Under oxidizing conditions two disulfide bonds are formed involving the reactive cysteines. Under reducing conditions zinc is bound to the reactive cysteines and the protein is inactive.</text>
</comment>
<comment type="similarity">
    <text evidence="1">Belongs to the HSP33 family.</text>
</comment>
<reference key="1">
    <citation type="journal article" date="2007" name="ISME J.">
        <title>Population level functional diversity in a microbial community revealed by comparative genomic and metagenomic analyses.</title>
        <authorList>
            <person name="Bhaya D."/>
            <person name="Grossman A.R."/>
            <person name="Steunou A.-S."/>
            <person name="Khuri N."/>
            <person name="Cohan F.M."/>
            <person name="Hamamura N."/>
            <person name="Melendrez M.C."/>
            <person name="Bateson M.M."/>
            <person name="Ward D.M."/>
            <person name="Heidelberg J.F."/>
        </authorList>
    </citation>
    <scope>NUCLEOTIDE SEQUENCE [LARGE SCALE GENOMIC DNA]</scope>
    <source>
        <strain>JA-2-3B'a(2-13)</strain>
    </source>
</reference>
<evidence type="ECO:0000255" key="1">
    <source>
        <dbReference type="HAMAP-Rule" id="MF_00117"/>
    </source>
</evidence>
<evidence type="ECO:0000256" key="2">
    <source>
        <dbReference type="SAM" id="MobiDB-lite"/>
    </source>
</evidence>
<accession>Q2JLK3</accession>
<proteinExistence type="inferred from homology"/>
<keyword id="KW-0143">Chaperone</keyword>
<keyword id="KW-0963">Cytoplasm</keyword>
<keyword id="KW-1015">Disulfide bond</keyword>
<keyword id="KW-0676">Redox-active center</keyword>
<keyword id="KW-1185">Reference proteome</keyword>
<keyword id="KW-0862">Zinc</keyword>
<name>HSLO_SYNJB</name>
<gene>
    <name evidence="1" type="primary">hslO</name>
    <name type="ordered locus">CYB_1437</name>
</gene>
<protein>
    <recommendedName>
        <fullName evidence="1">33 kDa chaperonin</fullName>
    </recommendedName>
    <alternativeName>
        <fullName evidence="1">Heat shock protein 33 homolog</fullName>
        <shortName evidence="1">HSP33</shortName>
    </alternativeName>
</protein>